<organism>
    <name type="scientific">Syntrophotalea carbinolica (strain DSM 2380 / NBRC 103641 / GraBd1)</name>
    <name type="common">Pelobacter carbinolicus</name>
    <dbReference type="NCBI Taxonomy" id="338963"/>
    <lineage>
        <taxon>Bacteria</taxon>
        <taxon>Pseudomonadati</taxon>
        <taxon>Thermodesulfobacteriota</taxon>
        <taxon>Desulfuromonadia</taxon>
        <taxon>Desulfuromonadales</taxon>
        <taxon>Syntrophotaleaceae</taxon>
        <taxon>Syntrophotalea</taxon>
    </lineage>
</organism>
<comment type="function">
    <text evidence="1">Catalyzes the last two sequential reactions in the de novo biosynthetic pathway for UDP-N-acetylglucosamine (UDP-GlcNAc). The C-terminal domain catalyzes the transfer of acetyl group from acetyl coenzyme A to glucosamine-1-phosphate (GlcN-1-P) to produce N-acetylglucosamine-1-phosphate (GlcNAc-1-P), which is converted into UDP-GlcNAc by the transfer of uridine 5-monophosphate (from uridine 5-triphosphate), a reaction catalyzed by the N-terminal domain.</text>
</comment>
<comment type="catalytic activity">
    <reaction evidence="1">
        <text>alpha-D-glucosamine 1-phosphate + acetyl-CoA = N-acetyl-alpha-D-glucosamine 1-phosphate + CoA + H(+)</text>
        <dbReference type="Rhea" id="RHEA:13725"/>
        <dbReference type="ChEBI" id="CHEBI:15378"/>
        <dbReference type="ChEBI" id="CHEBI:57287"/>
        <dbReference type="ChEBI" id="CHEBI:57288"/>
        <dbReference type="ChEBI" id="CHEBI:57776"/>
        <dbReference type="ChEBI" id="CHEBI:58516"/>
        <dbReference type="EC" id="2.3.1.157"/>
    </reaction>
</comment>
<comment type="catalytic activity">
    <reaction evidence="1">
        <text>N-acetyl-alpha-D-glucosamine 1-phosphate + UTP + H(+) = UDP-N-acetyl-alpha-D-glucosamine + diphosphate</text>
        <dbReference type="Rhea" id="RHEA:13509"/>
        <dbReference type="ChEBI" id="CHEBI:15378"/>
        <dbReference type="ChEBI" id="CHEBI:33019"/>
        <dbReference type="ChEBI" id="CHEBI:46398"/>
        <dbReference type="ChEBI" id="CHEBI:57705"/>
        <dbReference type="ChEBI" id="CHEBI:57776"/>
        <dbReference type="EC" id="2.7.7.23"/>
    </reaction>
</comment>
<comment type="cofactor">
    <cofactor evidence="1">
        <name>Mg(2+)</name>
        <dbReference type="ChEBI" id="CHEBI:18420"/>
    </cofactor>
    <text evidence="1">Binds 1 Mg(2+) ion per subunit.</text>
</comment>
<comment type="pathway">
    <text evidence="1">Nucleotide-sugar biosynthesis; UDP-N-acetyl-alpha-D-glucosamine biosynthesis; N-acetyl-alpha-D-glucosamine 1-phosphate from alpha-D-glucosamine 6-phosphate (route II): step 2/2.</text>
</comment>
<comment type="pathway">
    <text evidence="1">Nucleotide-sugar biosynthesis; UDP-N-acetyl-alpha-D-glucosamine biosynthesis; UDP-N-acetyl-alpha-D-glucosamine from N-acetyl-alpha-D-glucosamine 1-phosphate: step 1/1.</text>
</comment>
<comment type="pathway">
    <text evidence="1">Bacterial outer membrane biogenesis; LPS lipid A biosynthesis.</text>
</comment>
<comment type="subunit">
    <text evidence="1">Homotrimer.</text>
</comment>
<comment type="subcellular location">
    <subcellularLocation>
        <location evidence="1">Cytoplasm</location>
    </subcellularLocation>
</comment>
<comment type="similarity">
    <text evidence="1">In the N-terminal section; belongs to the N-acetylglucosamine-1-phosphate uridyltransferase family.</text>
</comment>
<comment type="similarity">
    <text evidence="1">In the C-terminal section; belongs to the transferase hexapeptide repeat family.</text>
</comment>
<evidence type="ECO:0000255" key="1">
    <source>
        <dbReference type="HAMAP-Rule" id="MF_01631"/>
    </source>
</evidence>
<protein>
    <recommendedName>
        <fullName evidence="1">Bifunctional protein GlmU</fullName>
    </recommendedName>
    <domain>
        <recommendedName>
            <fullName evidence="1">UDP-N-acetylglucosamine pyrophosphorylase</fullName>
            <ecNumber evidence="1">2.7.7.23</ecNumber>
        </recommendedName>
        <alternativeName>
            <fullName evidence="1">N-acetylglucosamine-1-phosphate uridyltransferase</fullName>
        </alternativeName>
    </domain>
    <domain>
        <recommendedName>
            <fullName evidence="1">Glucosamine-1-phosphate N-acetyltransferase</fullName>
            <ecNumber evidence="1">2.3.1.157</ecNumber>
        </recommendedName>
    </domain>
</protein>
<keyword id="KW-0012">Acyltransferase</keyword>
<keyword id="KW-0133">Cell shape</keyword>
<keyword id="KW-0961">Cell wall biogenesis/degradation</keyword>
<keyword id="KW-0963">Cytoplasm</keyword>
<keyword id="KW-0460">Magnesium</keyword>
<keyword id="KW-0479">Metal-binding</keyword>
<keyword id="KW-0511">Multifunctional enzyme</keyword>
<keyword id="KW-0548">Nucleotidyltransferase</keyword>
<keyword id="KW-0573">Peptidoglycan synthesis</keyword>
<keyword id="KW-1185">Reference proteome</keyword>
<keyword id="KW-0677">Repeat</keyword>
<keyword id="KW-0808">Transferase</keyword>
<accession>Q3A0D8</accession>
<proteinExistence type="inferred from homology"/>
<gene>
    <name evidence="1" type="primary">glmU</name>
    <name type="ordered locus">Pcar_2934</name>
</gene>
<reference key="1">
    <citation type="submission" date="2005-10" db="EMBL/GenBank/DDBJ databases">
        <title>Complete sequence of Pelobacter carbinolicus DSM 2380.</title>
        <authorList>
            <person name="Copeland A."/>
            <person name="Lucas S."/>
            <person name="Lapidus A."/>
            <person name="Barry K."/>
            <person name="Detter J.C."/>
            <person name="Glavina T."/>
            <person name="Hammon N."/>
            <person name="Israni S."/>
            <person name="Pitluck S."/>
            <person name="Chertkov O."/>
            <person name="Schmutz J."/>
            <person name="Larimer F."/>
            <person name="Land M."/>
            <person name="Kyrpides N."/>
            <person name="Ivanova N."/>
            <person name="Richardson P."/>
        </authorList>
    </citation>
    <scope>NUCLEOTIDE SEQUENCE [LARGE SCALE GENOMIC DNA]</scope>
    <source>
        <strain>DSM 2380 / NBRC 103641 / GraBd1</strain>
    </source>
</reference>
<name>GLMU_SYNC1</name>
<sequence length="464" mass="49541">MKHDELAAVILAAGKGTRMKSEQPKVLHPIAGKPMVTFPVAGALKHGCQPTVLVVGHGAEAVQAELAEDPVSFALQSEQLGTGHALLCARQALQEFSGTLLLLCGDVPLLRDETLERLIAEHEKTRAAVTVLTAELSQPFGYGRILREGDEVLGIVEEKDASSEQKTIREINTGIYAFEAPFVFEALSGVGCDNAQREYYLTDVLAAARAAGRRVGAVVLEDADEAMGINDRVQLAQASALMRRRINENLMRAGVSFIDPEQTYIEPQVEIGPDSVIYPGVCLGGDTRIGSGCLIEAQVTIRDCQLADNVHVKPGSVLEGSRVGSDTAIGPMAHLRPGTVLAGHNKIGNFVETKKAHIGLGSKASHLTYIGDAELGANVNIGCGTITCNYDGVNKHKTVIEDDVFVGSDTQFVAPVHIGRNSLIGAGSTITKDVPPNALALSRSQQRVVADWRLRHDPKCKNKD</sequence>
<feature type="chain" id="PRO_0000233812" description="Bifunctional protein GlmU">
    <location>
        <begin position="1"/>
        <end position="464"/>
    </location>
</feature>
<feature type="region of interest" description="Pyrophosphorylase" evidence="1">
    <location>
        <begin position="1"/>
        <end position="232"/>
    </location>
</feature>
<feature type="region of interest" description="Linker" evidence="1">
    <location>
        <begin position="233"/>
        <end position="253"/>
    </location>
</feature>
<feature type="region of interest" description="N-acetyltransferase" evidence="1">
    <location>
        <begin position="254"/>
        <end position="464"/>
    </location>
</feature>
<feature type="active site" description="Proton acceptor" evidence="1">
    <location>
        <position position="366"/>
    </location>
</feature>
<feature type="binding site" evidence="1">
    <location>
        <begin position="11"/>
        <end position="14"/>
    </location>
    <ligand>
        <name>UDP-N-acetyl-alpha-D-glucosamine</name>
        <dbReference type="ChEBI" id="CHEBI:57705"/>
    </ligand>
</feature>
<feature type="binding site" evidence="1">
    <location>
        <position position="25"/>
    </location>
    <ligand>
        <name>UDP-N-acetyl-alpha-D-glucosamine</name>
        <dbReference type="ChEBI" id="CHEBI:57705"/>
    </ligand>
</feature>
<feature type="binding site" evidence="1">
    <location>
        <position position="76"/>
    </location>
    <ligand>
        <name>UDP-N-acetyl-alpha-D-glucosamine</name>
        <dbReference type="ChEBI" id="CHEBI:57705"/>
    </ligand>
</feature>
<feature type="binding site" evidence="1">
    <location>
        <begin position="81"/>
        <end position="82"/>
    </location>
    <ligand>
        <name>UDP-N-acetyl-alpha-D-glucosamine</name>
        <dbReference type="ChEBI" id="CHEBI:57705"/>
    </ligand>
</feature>
<feature type="binding site" evidence="1">
    <location>
        <position position="106"/>
    </location>
    <ligand>
        <name>Mg(2+)</name>
        <dbReference type="ChEBI" id="CHEBI:18420"/>
    </ligand>
</feature>
<feature type="binding site" evidence="1">
    <location>
        <position position="143"/>
    </location>
    <ligand>
        <name>UDP-N-acetyl-alpha-D-glucosamine</name>
        <dbReference type="ChEBI" id="CHEBI:57705"/>
    </ligand>
</feature>
<feature type="binding site" evidence="1">
    <location>
        <position position="157"/>
    </location>
    <ligand>
        <name>UDP-N-acetyl-alpha-D-glucosamine</name>
        <dbReference type="ChEBI" id="CHEBI:57705"/>
    </ligand>
</feature>
<feature type="binding site" evidence="1">
    <location>
        <position position="172"/>
    </location>
    <ligand>
        <name>UDP-N-acetyl-alpha-D-glucosamine</name>
        <dbReference type="ChEBI" id="CHEBI:57705"/>
    </ligand>
</feature>
<feature type="binding site" evidence="1">
    <location>
        <position position="230"/>
    </location>
    <ligand>
        <name>Mg(2+)</name>
        <dbReference type="ChEBI" id="CHEBI:18420"/>
    </ligand>
</feature>
<feature type="binding site" evidence="1">
    <location>
        <position position="230"/>
    </location>
    <ligand>
        <name>UDP-N-acetyl-alpha-D-glucosamine</name>
        <dbReference type="ChEBI" id="CHEBI:57705"/>
    </ligand>
</feature>
<feature type="binding site" evidence="1">
    <location>
        <position position="336"/>
    </location>
    <ligand>
        <name>UDP-N-acetyl-alpha-D-glucosamine</name>
        <dbReference type="ChEBI" id="CHEBI:57705"/>
    </ligand>
</feature>
<feature type="binding site" evidence="1">
    <location>
        <position position="354"/>
    </location>
    <ligand>
        <name>UDP-N-acetyl-alpha-D-glucosamine</name>
        <dbReference type="ChEBI" id="CHEBI:57705"/>
    </ligand>
</feature>
<feature type="binding site" evidence="1">
    <location>
        <position position="369"/>
    </location>
    <ligand>
        <name>UDP-N-acetyl-alpha-D-glucosamine</name>
        <dbReference type="ChEBI" id="CHEBI:57705"/>
    </ligand>
</feature>
<feature type="binding site" evidence="1">
    <location>
        <position position="380"/>
    </location>
    <ligand>
        <name>UDP-N-acetyl-alpha-D-glucosamine</name>
        <dbReference type="ChEBI" id="CHEBI:57705"/>
    </ligand>
</feature>
<feature type="binding site" evidence="1">
    <location>
        <begin position="389"/>
        <end position="390"/>
    </location>
    <ligand>
        <name>acetyl-CoA</name>
        <dbReference type="ChEBI" id="CHEBI:57288"/>
    </ligand>
</feature>
<feature type="binding site" evidence="1">
    <location>
        <position position="408"/>
    </location>
    <ligand>
        <name>acetyl-CoA</name>
        <dbReference type="ChEBI" id="CHEBI:57288"/>
    </ligand>
</feature>
<feature type="binding site" evidence="1">
    <location>
        <position position="426"/>
    </location>
    <ligand>
        <name>acetyl-CoA</name>
        <dbReference type="ChEBI" id="CHEBI:57288"/>
    </ligand>
</feature>
<feature type="binding site" evidence="1">
    <location>
        <position position="443"/>
    </location>
    <ligand>
        <name>acetyl-CoA</name>
        <dbReference type="ChEBI" id="CHEBI:57288"/>
    </ligand>
</feature>
<dbReference type="EC" id="2.7.7.23" evidence="1"/>
<dbReference type="EC" id="2.3.1.157" evidence="1"/>
<dbReference type="EMBL" id="CP000142">
    <property type="protein sequence ID" value="ABA90169.1"/>
    <property type="molecule type" value="Genomic_DNA"/>
</dbReference>
<dbReference type="RefSeq" id="WP_011342722.1">
    <property type="nucleotide sequence ID" value="NC_007498.2"/>
</dbReference>
<dbReference type="SMR" id="Q3A0D8"/>
<dbReference type="STRING" id="338963.Pcar_2934"/>
<dbReference type="KEGG" id="pca:Pcar_2934"/>
<dbReference type="eggNOG" id="COG1207">
    <property type="taxonomic scope" value="Bacteria"/>
</dbReference>
<dbReference type="HOGENOM" id="CLU_029499_15_2_7"/>
<dbReference type="OrthoDB" id="9775031at2"/>
<dbReference type="UniPathway" id="UPA00113">
    <property type="reaction ID" value="UER00532"/>
</dbReference>
<dbReference type="UniPathway" id="UPA00113">
    <property type="reaction ID" value="UER00533"/>
</dbReference>
<dbReference type="UniPathway" id="UPA00973"/>
<dbReference type="Proteomes" id="UP000002534">
    <property type="component" value="Chromosome"/>
</dbReference>
<dbReference type="GO" id="GO:0005737">
    <property type="term" value="C:cytoplasm"/>
    <property type="evidence" value="ECO:0007669"/>
    <property type="project" value="UniProtKB-SubCell"/>
</dbReference>
<dbReference type="GO" id="GO:0016020">
    <property type="term" value="C:membrane"/>
    <property type="evidence" value="ECO:0007669"/>
    <property type="project" value="GOC"/>
</dbReference>
<dbReference type="GO" id="GO:0019134">
    <property type="term" value="F:glucosamine-1-phosphate N-acetyltransferase activity"/>
    <property type="evidence" value="ECO:0007669"/>
    <property type="project" value="UniProtKB-UniRule"/>
</dbReference>
<dbReference type="GO" id="GO:0000287">
    <property type="term" value="F:magnesium ion binding"/>
    <property type="evidence" value="ECO:0007669"/>
    <property type="project" value="UniProtKB-UniRule"/>
</dbReference>
<dbReference type="GO" id="GO:0003977">
    <property type="term" value="F:UDP-N-acetylglucosamine diphosphorylase activity"/>
    <property type="evidence" value="ECO:0007669"/>
    <property type="project" value="UniProtKB-UniRule"/>
</dbReference>
<dbReference type="GO" id="GO:0000902">
    <property type="term" value="P:cell morphogenesis"/>
    <property type="evidence" value="ECO:0007669"/>
    <property type="project" value="UniProtKB-UniRule"/>
</dbReference>
<dbReference type="GO" id="GO:0071555">
    <property type="term" value="P:cell wall organization"/>
    <property type="evidence" value="ECO:0007669"/>
    <property type="project" value="UniProtKB-KW"/>
</dbReference>
<dbReference type="GO" id="GO:0009245">
    <property type="term" value="P:lipid A biosynthetic process"/>
    <property type="evidence" value="ECO:0007669"/>
    <property type="project" value="UniProtKB-UniRule"/>
</dbReference>
<dbReference type="GO" id="GO:0009252">
    <property type="term" value="P:peptidoglycan biosynthetic process"/>
    <property type="evidence" value="ECO:0007669"/>
    <property type="project" value="UniProtKB-UniRule"/>
</dbReference>
<dbReference type="GO" id="GO:0008360">
    <property type="term" value="P:regulation of cell shape"/>
    <property type="evidence" value="ECO:0007669"/>
    <property type="project" value="UniProtKB-KW"/>
</dbReference>
<dbReference type="GO" id="GO:0006048">
    <property type="term" value="P:UDP-N-acetylglucosamine biosynthetic process"/>
    <property type="evidence" value="ECO:0007669"/>
    <property type="project" value="UniProtKB-UniPathway"/>
</dbReference>
<dbReference type="CDD" id="cd02540">
    <property type="entry name" value="GT2_GlmU_N_bac"/>
    <property type="match status" value="1"/>
</dbReference>
<dbReference type="CDD" id="cd03353">
    <property type="entry name" value="LbH_GlmU_C"/>
    <property type="match status" value="1"/>
</dbReference>
<dbReference type="Gene3D" id="2.160.10.10">
    <property type="entry name" value="Hexapeptide repeat proteins"/>
    <property type="match status" value="1"/>
</dbReference>
<dbReference type="Gene3D" id="3.90.550.10">
    <property type="entry name" value="Spore Coat Polysaccharide Biosynthesis Protein SpsA, Chain A"/>
    <property type="match status" value="1"/>
</dbReference>
<dbReference type="HAMAP" id="MF_01631">
    <property type="entry name" value="GlmU"/>
    <property type="match status" value="1"/>
</dbReference>
<dbReference type="InterPro" id="IPR005882">
    <property type="entry name" value="Bifunctional_GlmU"/>
</dbReference>
<dbReference type="InterPro" id="IPR050065">
    <property type="entry name" value="GlmU-like"/>
</dbReference>
<dbReference type="InterPro" id="IPR038009">
    <property type="entry name" value="GlmU_C_LbH"/>
</dbReference>
<dbReference type="InterPro" id="IPR001451">
    <property type="entry name" value="Hexapep"/>
</dbReference>
<dbReference type="InterPro" id="IPR025877">
    <property type="entry name" value="MobA-like_NTP_Trfase"/>
</dbReference>
<dbReference type="InterPro" id="IPR029044">
    <property type="entry name" value="Nucleotide-diphossugar_trans"/>
</dbReference>
<dbReference type="InterPro" id="IPR011004">
    <property type="entry name" value="Trimer_LpxA-like_sf"/>
</dbReference>
<dbReference type="NCBIfam" id="TIGR01173">
    <property type="entry name" value="glmU"/>
    <property type="match status" value="1"/>
</dbReference>
<dbReference type="NCBIfam" id="NF010934">
    <property type="entry name" value="PRK14354.1"/>
    <property type="match status" value="1"/>
</dbReference>
<dbReference type="NCBIfam" id="NF010935">
    <property type="entry name" value="PRK14355.1"/>
    <property type="match status" value="1"/>
</dbReference>
<dbReference type="PANTHER" id="PTHR43584:SF3">
    <property type="entry name" value="BIFUNCTIONAL PROTEIN GLMU"/>
    <property type="match status" value="1"/>
</dbReference>
<dbReference type="PANTHER" id="PTHR43584">
    <property type="entry name" value="NUCLEOTIDYL TRANSFERASE"/>
    <property type="match status" value="1"/>
</dbReference>
<dbReference type="Pfam" id="PF00132">
    <property type="entry name" value="Hexapep"/>
    <property type="match status" value="1"/>
</dbReference>
<dbReference type="Pfam" id="PF12804">
    <property type="entry name" value="NTP_transf_3"/>
    <property type="match status" value="1"/>
</dbReference>
<dbReference type="SUPFAM" id="SSF53448">
    <property type="entry name" value="Nucleotide-diphospho-sugar transferases"/>
    <property type="match status" value="1"/>
</dbReference>
<dbReference type="SUPFAM" id="SSF51161">
    <property type="entry name" value="Trimeric LpxA-like enzymes"/>
    <property type="match status" value="1"/>
</dbReference>